<organism>
    <name type="scientific">Phaeosphaeria nodorum (strain SN15 / ATCC MYA-4574 / FGSC 10173)</name>
    <name type="common">Glume blotch fungus</name>
    <name type="synonym">Parastagonospora nodorum</name>
    <dbReference type="NCBI Taxonomy" id="321614"/>
    <lineage>
        <taxon>Eukaryota</taxon>
        <taxon>Fungi</taxon>
        <taxon>Dikarya</taxon>
        <taxon>Ascomycota</taxon>
        <taxon>Pezizomycotina</taxon>
        <taxon>Dothideomycetes</taxon>
        <taxon>Pleosporomycetidae</taxon>
        <taxon>Pleosporales</taxon>
        <taxon>Pleosporineae</taxon>
        <taxon>Phaeosphaeriaceae</taxon>
        <taxon>Parastagonospora</taxon>
    </lineage>
</organism>
<accession>Q0UIU6</accession>
<keyword id="KW-0963">Cytoplasm</keyword>
<keyword id="KW-0396">Initiation factor</keyword>
<keyword id="KW-0648">Protein biosynthesis</keyword>
<dbReference type="EMBL" id="CH445336">
    <property type="protein sequence ID" value="EAT84594.2"/>
    <property type="molecule type" value="Genomic_DNA"/>
</dbReference>
<dbReference type="RefSeq" id="XP_001798638.1">
    <property type="nucleotide sequence ID" value="XM_001798586.1"/>
</dbReference>
<dbReference type="SMR" id="Q0UIU6"/>
<dbReference type="STRING" id="321614.Q0UIU6"/>
<dbReference type="EnsemblFungi" id="SNOT_08318">
    <property type="protein sequence ID" value="SNOT_08318"/>
    <property type="gene ID" value="SNOG_08318"/>
</dbReference>
<dbReference type="GeneID" id="5975536"/>
<dbReference type="KEGG" id="pno:SNOG_08318"/>
<dbReference type="VEuPathDB" id="FungiDB:JI435_083180"/>
<dbReference type="eggNOG" id="KOG3677">
    <property type="taxonomic scope" value="Eukaryota"/>
</dbReference>
<dbReference type="HOGENOM" id="CLU_029210_2_0_1"/>
<dbReference type="InParanoid" id="Q0UIU6"/>
<dbReference type="Proteomes" id="UP000001055">
    <property type="component" value="Unassembled WGS sequence"/>
</dbReference>
<dbReference type="GO" id="GO:0016282">
    <property type="term" value="C:eukaryotic 43S preinitiation complex"/>
    <property type="evidence" value="ECO:0007669"/>
    <property type="project" value="UniProtKB-UniRule"/>
</dbReference>
<dbReference type="GO" id="GO:0033290">
    <property type="term" value="C:eukaryotic 48S preinitiation complex"/>
    <property type="evidence" value="ECO:0007669"/>
    <property type="project" value="UniProtKB-UniRule"/>
</dbReference>
<dbReference type="GO" id="GO:0005852">
    <property type="term" value="C:eukaryotic translation initiation factor 3 complex"/>
    <property type="evidence" value="ECO:0000318"/>
    <property type="project" value="GO_Central"/>
</dbReference>
<dbReference type="GO" id="GO:0003743">
    <property type="term" value="F:translation initiation factor activity"/>
    <property type="evidence" value="ECO:0007669"/>
    <property type="project" value="UniProtKB-UniRule"/>
</dbReference>
<dbReference type="GO" id="GO:0001732">
    <property type="term" value="P:formation of cytoplasmic translation initiation complex"/>
    <property type="evidence" value="ECO:0007669"/>
    <property type="project" value="UniProtKB-UniRule"/>
</dbReference>
<dbReference type="GO" id="GO:0006413">
    <property type="term" value="P:translational initiation"/>
    <property type="evidence" value="ECO:0000318"/>
    <property type="project" value="GO_Central"/>
</dbReference>
<dbReference type="HAMAP" id="MF_03011">
    <property type="entry name" value="eIF3l"/>
    <property type="match status" value="1"/>
</dbReference>
<dbReference type="InterPro" id="IPR019382">
    <property type="entry name" value="eIF3l"/>
</dbReference>
<dbReference type="InterPro" id="IPR000717">
    <property type="entry name" value="PCI_dom"/>
</dbReference>
<dbReference type="PANTHER" id="PTHR13242">
    <property type="entry name" value="EUKARYOTIC TRANSLATION INITIATION FACTOR 3"/>
    <property type="match status" value="1"/>
</dbReference>
<dbReference type="PANTHER" id="PTHR13242:SF0">
    <property type="entry name" value="EUKARYOTIC TRANSLATION INITIATION FACTOR 3 SUBUNIT L"/>
    <property type="match status" value="1"/>
</dbReference>
<dbReference type="Pfam" id="PF10255">
    <property type="entry name" value="Paf67"/>
    <property type="match status" value="1"/>
</dbReference>
<dbReference type="PROSITE" id="PS50250">
    <property type="entry name" value="PCI"/>
    <property type="match status" value="1"/>
</dbReference>
<gene>
    <name type="ORF">SNOG_08318</name>
</gene>
<comment type="function">
    <text evidence="1">Component of the eukaryotic translation initiation factor 3 (eIF-3) complex, which is involved in protein synthesis of a specialized repertoire of mRNAs and, together with other initiation factors, stimulates binding of mRNA and methionyl-tRNAi to the 40S ribosome. The eIF-3 complex specifically targets and initiates translation of a subset of mRNAs involved in cell proliferation.</text>
</comment>
<comment type="subunit">
    <text evidence="1">Component of the eukaryotic translation initiation factor 3 (eIF-3) complex.</text>
</comment>
<comment type="subcellular location">
    <subcellularLocation>
        <location evidence="1">Cytoplasm</location>
    </subcellularLocation>
</comment>
<comment type="similarity">
    <text evidence="1">Belongs to the eIF-3 subunit L family.</text>
</comment>
<evidence type="ECO:0000255" key="1">
    <source>
        <dbReference type="HAMAP-Rule" id="MF_03011"/>
    </source>
</evidence>
<evidence type="ECO:0000255" key="2">
    <source>
        <dbReference type="PROSITE-ProRule" id="PRU01185"/>
    </source>
</evidence>
<evidence type="ECO:0000256" key="3">
    <source>
        <dbReference type="SAM" id="MobiDB-lite"/>
    </source>
</evidence>
<sequence length="488" mass="56851">MSLPQHQNRDAARRAPDDDDDAEEETMANDYREQVQYDGMDDMDRMPSISNNQDIHAQLQAAATPLEFQATLETKFASYDNYCNLFHYILNSEGPVDLEVPNYYWAWDVIDEFIYQFNSFCSYRQKVALKNDNEEEITLLRENPNTWGCYSVLNVLYSLIQRSQISEQLAAMKRGEDAALYAGEYGNRPLYKMLGYFSIIGLLRVHCLLGDFSLALKTLDDIELNKKAMFARVMAAHFTTYYYVGFSYMMMRRYADAIRMFSHILVYVSRTKNFQKNAQYDSITKKNDQMYALVAICVAFHPTRLDDTIHTALREKYGEQFNRLQRGGPDALPLFEELFRTACPKFISPTPPDFDNPEVNIDPVEHHLRIFMDEVKNNMMSPTVKSYLKLYTTMDLKKLAGFLEVEPEKLRCWLLVNKQRNRQTRWSEGGLLERRGDPQQRSRLRHGKEISSTCLRPRSAGDWSTGIFVIWPGHTKARRRASRGRPLF</sequence>
<protein>
    <recommendedName>
        <fullName evidence="1">Eukaryotic translation initiation factor 3 subunit L</fullName>
        <shortName evidence="1">eIF3l</shortName>
    </recommendedName>
</protein>
<reference key="1">
    <citation type="journal article" date="2007" name="Plant Cell">
        <title>Dothideomycete-plant interactions illuminated by genome sequencing and EST analysis of the wheat pathogen Stagonospora nodorum.</title>
        <authorList>
            <person name="Hane J.K."/>
            <person name="Lowe R.G.T."/>
            <person name="Solomon P.S."/>
            <person name="Tan K.-C."/>
            <person name="Schoch C.L."/>
            <person name="Spatafora J.W."/>
            <person name="Crous P.W."/>
            <person name="Kodira C.D."/>
            <person name="Birren B.W."/>
            <person name="Galagan J.E."/>
            <person name="Torriani S.F.F."/>
            <person name="McDonald B.A."/>
            <person name="Oliver R.P."/>
        </authorList>
    </citation>
    <scope>NUCLEOTIDE SEQUENCE [LARGE SCALE GENOMIC DNA]</scope>
    <source>
        <strain>SN15 / ATCC MYA-4574 / FGSC 10173</strain>
    </source>
</reference>
<proteinExistence type="inferred from homology"/>
<name>EIF3L_PHANO</name>
<feature type="chain" id="PRO_0000364269" description="Eukaryotic translation initiation factor 3 subunit L">
    <location>
        <begin position="1"/>
        <end position="488"/>
    </location>
</feature>
<feature type="domain" description="PCI" evidence="2">
    <location>
        <begin position="256"/>
        <end position="450"/>
    </location>
</feature>
<feature type="region of interest" description="Disordered" evidence="3">
    <location>
        <begin position="1"/>
        <end position="34"/>
    </location>
</feature>
<feature type="region of interest" description="Disordered" evidence="3">
    <location>
        <begin position="427"/>
        <end position="449"/>
    </location>
</feature>
<feature type="compositionally biased region" description="Basic and acidic residues" evidence="3">
    <location>
        <begin position="7"/>
        <end position="16"/>
    </location>
</feature>
<feature type="compositionally biased region" description="Acidic residues" evidence="3">
    <location>
        <begin position="17"/>
        <end position="27"/>
    </location>
</feature>
<feature type="compositionally biased region" description="Basic and acidic residues" evidence="3">
    <location>
        <begin position="431"/>
        <end position="440"/>
    </location>
</feature>